<proteinExistence type="inferred from homology"/>
<sequence>MKKTLLAVSAALALTSSFTANAAENDQPQYLSDWWHQSVNVVGSYHTRFSPKLNNDVYLEYEAFAKKDWFDFYGYIDIPKTFDWGNGNDKGIWSDGSPLFMEIEPRFSIDKLTGADLSFGPFKEWYFANNYIYDMGDNKASRQSTWYMGLGTDIDTGLPMGLSLNVYAKYQWQNYGASNENEWDGYRFKVKYFVPITDLWGGKLSYIGFTNFDWGSDLGDDPNRTSNSIASSHILALNYDHWHYSVVARYFHNGGQWQNGAKLNWGDGDFSAKSTGWGGYLVVGYNF</sequence>
<accession>P0A262</accession>
<accession>P40776</accession>
<dbReference type="EMBL" id="AL513382">
    <property type="protein sequence ID" value="CAD08869.1"/>
    <property type="molecule type" value="Genomic_DNA"/>
</dbReference>
<dbReference type="EMBL" id="AE014613">
    <property type="protein sequence ID" value="AAO70040.1"/>
    <property type="molecule type" value="Genomic_DNA"/>
</dbReference>
<dbReference type="RefSeq" id="NP_455008.1">
    <property type="nucleotide sequence ID" value="NC_003198.1"/>
</dbReference>
<dbReference type="RefSeq" id="WP_000752021.1">
    <property type="nucleotide sequence ID" value="NZ_WSUR01000026.1"/>
</dbReference>
<dbReference type="SMR" id="P0A262"/>
<dbReference type="STRING" id="220341.gene:17584474"/>
<dbReference type="KEGG" id="stt:t2450"/>
<dbReference type="KEGG" id="sty:STY0451"/>
<dbReference type="PATRIC" id="fig|220341.7.peg.450"/>
<dbReference type="eggNOG" id="COG3248">
    <property type="taxonomic scope" value="Bacteria"/>
</dbReference>
<dbReference type="HOGENOM" id="CLU_073836_0_0_6"/>
<dbReference type="OMA" id="KSTGWGY"/>
<dbReference type="OrthoDB" id="104801at2"/>
<dbReference type="Proteomes" id="UP000000541">
    <property type="component" value="Chromosome"/>
</dbReference>
<dbReference type="Proteomes" id="UP000002670">
    <property type="component" value="Chromosome"/>
</dbReference>
<dbReference type="GO" id="GO:0009279">
    <property type="term" value="C:cell outer membrane"/>
    <property type="evidence" value="ECO:0007669"/>
    <property type="project" value="UniProtKB-SubCell"/>
</dbReference>
<dbReference type="GO" id="GO:0046930">
    <property type="term" value="C:pore complex"/>
    <property type="evidence" value="ECO:0007669"/>
    <property type="project" value="UniProtKB-KW"/>
</dbReference>
<dbReference type="GO" id="GO:0005337">
    <property type="term" value="F:nucleoside transmembrane transporter activity"/>
    <property type="evidence" value="ECO:0007669"/>
    <property type="project" value="InterPro"/>
</dbReference>
<dbReference type="GO" id="GO:0015288">
    <property type="term" value="F:porin activity"/>
    <property type="evidence" value="ECO:0007669"/>
    <property type="project" value="UniProtKB-KW"/>
</dbReference>
<dbReference type="GO" id="GO:0006811">
    <property type="term" value="P:monoatomic ion transport"/>
    <property type="evidence" value="ECO:0007669"/>
    <property type="project" value="UniProtKB-KW"/>
</dbReference>
<dbReference type="Gene3D" id="2.40.230.20">
    <property type="entry name" value="Nucleoside-specific channel-forming protein, Tsx-like"/>
    <property type="match status" value="1"/>
</dbReference>
<dbReference type="InterPro" id="IPR003055">
    <property type="entry name" value="Channel_Tsx"/>
</dbReference>
<dbReference type="InterPro" id="IPR018013">
    <property type="entry name" value="Channel_Tsx-like"/>
</dbReference>
<dbReference type="InterPro" id="IPR036777">
    <property type="entry name" value="Channel_Tsx-like_sf"/>
</dbReference>
<dbReference type="NCBIfam" id="NF011686">
    <property type="entry name" value="PRK15106.1"/>
    <property type="match status" value="1"/>
</dbReference>
<dbReference type="Pfam" id="PF03502">
    <property type="entry name" value="Channel_Tsx"/>
    <property type="match status" value="1"/>
</dbReference>
<dbReference type="PRINTS" id="PR01277">
    <property type="entry name" value="CHANNELTSX"/>
</dbReference>
<dbReference type="SUPFAM" id="SSF111364">
    <property type="entry name" value="Tsx-like channel"/>
    <property type="match status" value="1"/>
</dbReference>
<organism>
    <name type="scientific">Salmonella typhi</name>
    <dbReference type="NCBI Taxonomy" id="90370"/>
    <lineage>
        <taxon>Bacteria</taxon>
        <taxon>Pseudomonadati</taxon>
        <taxon>Pseudomonadota</taxon>
        <taxon>Gammaproteobacteria</taxon>
        <taxon>Enterobacterales</taxon>
        <taxon>Enterobacteriaceae</taxon>
        <taxon>Salmonella</taxon>
    </lineage>
</organism>
<feature type="signal peptide" evidence="2">
    <location>
        <begin position="1"/>
        <end position="22"/>
    </location>
</feature>
<feature type="chain" id="PRO_0000025194" description="Nucleoside-specific channel-forming protein Tsx">
    <location>
        <begin position="23"/>
        <end position="287"/>
    </location>
</feature>
<name>TSX_SALTI</name>
<evidence type="ECO:0000250" key="1">
    <source>
        <dbReference type="UniProtKB" id="P0A927"/>
    </source>
</evidence>
<evidence type="ECO:0000255" key="2"/>
<evidence type="ECO:0000305" key="3"/>
<keyword id="KW-0998">Cell outer membrane</keyword>
<keyword id="KW-0406">Ion transport</keyword>
<keyword id="KW-0472">Membrane</keyword>
<keyword id="KW-0626">Porin</keyword>
<keyword id="KW-0732">Signal</keyword>
<keyword id="KW-0812">Transmembrane</keyword>
<keyword id="KW-1134">Transmembrane beta strand</keyword>
<keyword id="KW-0813">Transport</keyword>
<protein>
    <recommendedName>
        <fullName evidence="1">Nucleoside-specific channel-forming protein Tsx</fullName>
    </recommendedName>
</protein>
<comment type="function">
    <text evidence="1">Functions as a substrate-specific channel for nucleosides and deoxynucleosides.</text>
</comment>
<comment type="subcellular location">
    <subcellularLocation>
        <location evidence="1">Cell outer membrane</location>
        <topology evidence="1">Multi-pass membrane protein</topology>
    </subcellularLocation>
</comment>
<comment type="similarity">
    <text evidence="3">Belongs to the nucleoside-specific channel-forming outer membrane porin (Tsx) (TC 1.B.10) family.</text>
</comment>
<reference key="1">
    <citation type="journal article" date="2001" name="Nature">
        <title>Complete genome sequence of a multiple drug resistant Salmonella enterica serovar Typhi CT18.</title>
        <authorList>
            <person name="Parkhill J."/>
            <person name="Dougan G."/>
            <person name="James K.D."/>
            <person name="Thomson N.R."/>
            <person name="Pickard D."/>
            <person name="Wain J."/>
            <person name="Churcher C.M."/>
            <person name="Mungall K.L."/>
            <person name="Bentley S.D."/>
            <person name="Holden M.T.G."/>
            <person name="Sebaihia M."/>
            <person name="Baker S."/>
            <person name="Basham D."/>
            <person name="Brooks K."/>
            <person name="Chillingworth T."/>
            <person name="Connerton P."/>
            <person name="Cronin A."/>
            <person name="Davis P."/>
            <person name="Davies R.M."/>
            <person name="Dowd L."/>
            <person name="White N."/>
            <person name="Farrar J."/>
            <person name="Feltwell T."/>
            <person name="Hamlin N."/>
            <person name="Haque A."/>
            <person name="Hien T.T."/>
            <person name="Holroyd S."/>
            <person name="Jagels K."/>
            <person name="Krogh A."/>
            <person name="Larsen T.S."/>
            <person name="Leather S."/>
            <person name="Moule S."/>
            <person name="O'Gaora P."/>
            <person name="Parry C."/>
            <person name="Quail M.A."/>
            <person name="Rutherford K.M."/>
            <person name="Simmonds M."/>
            <person name="Skelton J."/>
            <person name="Stevens K."/>
            <person name="Whitehead S."/>
            <person name="Barrell B.G."/>
        </authorList>
    </citation>
    <scope>NUCLEOTIDE SEQUENCE [LARGE SCALE GENOMIC DNA]</scope>
    <source>
        <strain>CT18</strain>
    </source>
</reference>
<reference key="2">
    <citation type="journal article" date="2003" name="J. Bacteriol.">
        <title>Comparative genomics of Salmonella enterica serovar Typhi strains Ty2 and CT18.</title>
        <authorList>
            <person name="Deng W."/>
            <person name="Liou S.-R."/>
            <person name="Plunkett G. III"/>
            <person name="Mayhew G.F."/>
            <person name="Rose D.J."/>
            <person name="Burland V."/>
            <person name="Kodoyianni V."/>
            <person name="Schwartz D.C."/>
            <person name="Blattner F.R."/>
        </authorList>
    </citation>
    <scope>NUCLEOTIDE SEQUENCE [LARGE SCALE GENOMIC DNA]</scope>
    <source>
        <strain>ATCC 700931 / Ty2</strain>
    </source>
</reference>
<gene>
    <name type="primary">tsx</name>
    <name type="ordered locus">STY0451</name>
    <name type="ordered locus">t2450</name>
</gene>